<evidence type="ECO:0000255" key="1">
    <source>
        <dbReference type="HAMAP-Rule" id="MF_01363"/>
    </source>
</evidence>
<evidence type="ECO:0000305" key="2"/>
<proteinExistence type="inferred from homology"/>
<sequence length="102" mass="11228">MYAIIETGGKQIKVEAGQEIYVEKLAGEVGDVITFDKVLFVGGDSAKVGVPFVEGATVTAKVEKQGRAKKLTVYKYKPKKNYHKKQGHRQPYTKLTIDAINA</sequence>
<gene>
    <name evidence="1" type="primary">rplU</name>
    <name type="ordered locus">Lm4b_01553</name>
</gene>
<comment type="function">
    <text evidence="1">This protein binds to 23S rRNA in the presence of protein L20.</text>
</comment>
<comment type="subunit">
    <text evidence="1">Part of the 50S ribosomal subunit. Contacts protein L20.</text>
</comment>
<comment type="similarity">
    <text evidence="1">Belongs to the bacterial ribosomal protein bL21 family.</text>
</comment>
<name>RL21_LISMC</name>
<keyword id="KW-0687">Ribonucleoprotein</keyword>
<keyword id="KW-0689">Ribosomal protein</keyword>
<keyword id="KW-0694">RNA-binding</keyword>
<keyword id="KW-0699">rRNA-binding</keyword>
<organism>
    <name type="scientific">Listeria monocytogenes serotype 4b (strain CLIP80459)</name>
    <dbReference type="NCBI Taxonomy" id="568819"/>
    <lineage>
        <taxon>Bacteria</taxon>
        <taxon>Bacillati</taxon>
        <taxon>Bacillota</taxon>
        <taxon>Bacilli</taxon>
        <taxon>Bacillales</taxon>
        <taxon>Listeriaceae</taxon>
        <taxon>Listeria</taxon>
    </lineage>
</organism>
<reference key="1">
    <citation type="journal article" date="2012" name="BMC Genomics">
        <title>Comparative genomics and transcriptomics of lineages I, II, and III strains of Listeria monocytogenes.</title>
        <authorList>
            <person name="Hain T."/>
            <person name="Ghai R."/>
            <person name="Billion A."/>
            <person name="Kuenne C.T."/>
            <person name="Steinweg C."/>
            <person name="Izar B."/>
            <person name="Mohamed W."/>
            <person name="Mraheil M."/>
            <person name="Domann E."/>
            <person name="Schaffrath S."/>
            <person name="Karst U."/>
            <person name="Goesmann A."/>
            <person name="Oehm S."/>
            <person name="Puhler A."/>
            <person name="Merkl R."/>
            <person name="Vorwerk S."/>
            <person name="Glaser P."/>
            <person name="Garrido P."/>
            <person name="Rusniok C."/>
            <person name="Buchrieser C."/>
            <person name="Goebel W."/>
            <person name="Chakraborty T."/>
        </authorList>
    </citation>
    <scope>NUCLEOTIDE SEQUENCE [LARGE SCALE GENOMIC DNA]</scope>
    <source>
        <strain>CLIP80459</strain>
    </source>
</reference>
<protein>
    <recommendedName>
        <fullName evidence="1">Large ribosomal subunit protein bL21</fullName>
    </recommendedName>
    <alternativeName>
        <fullName evidence="2">50S ribosomal protein L21</fullName>
    </alternativeName>
</protein>
<accession>C1KVI9</accession>
<feature type="chain" id="PRO_1000214896" description="Large ribosomal subunit protein bL21">
    <location>
        <begin position="1"/>
        <end position="102"/>
    </location>
</feature>
<dbReference type="EMBL" id="FM242711">
    <property type="protein sequence ID" value="CAS05314.1"/>
    <property type="molecule type" value="Genomic_DNA"/>
</dbReference>
<dbReference type="RefSeq" id="WP_012681305.1">
    <property type="nucleotide sequence ID" value="NC_012488.1"/>
</dbReference>
<dbReference type="SMR" id="C1KVI9"/>
<dbReference type="KEGG" id="lmc:Lm4b_01553"/>
<dbReference type="HOGENOM" id="CLU_061463_3_2_9"/>
<dbReference type="GO" id="GO:0005737">
    <property type="term" value="C:cytoplasm"/>
    <property type="evidence" value="ECO:0007669"/>
    <property type="project" value="UniProtKB-ARBA"/>
</dbReference>
<dbReference type="GO" id="GO:1990904">
    <property type="term" value="C:ribonucleoprotein complex"/>
    <property type="evidence" value="ECO:0007669"/>
    <property type="project" value="UniProtKB-KW"/>
</dbReference>
<dbReference type="GO" id="GO:0005840">
    <property type="term" value="C:ribosome"/>
    <property type="evidence" value="ECO:0007669"/>
    <property type="project" value="UniProtKB-KW"/>
</dbReference>
<dbReference type="GO" id="GO:0019843">
    <property type="term" value="F:rRNA binding"/>
    <property type="evidence" value="ECO:0007669"/>
    <property type="project" value="UniProtKB-UniRule"/>
</dbReference>
<dbReference type="GO" id="GO:0003735">
    <property type="term" value="F:structural constituent of ribosome"/>
    <property type="evidence" value="ECO:0007669"/>
    <property type="project" value="InterPro"/>
</dbReference>
<dbReference type="GO" id="GO:0006412">
    <property type="term" value="P:translation"/>
    <property type="evidence" value="ECO:0007669"/>
    <property type="project" value="UniProtKB-UniRule"/>
</dbReference>
<dbReference type="HAMAP" id="MF_01363">
    <property type="entry name" value="Ribosomal_bL21"/>
    <property type="match status" value="1"/>
</dbReference>
<dbReference type="InterPro" id="IPR028909">
    <property type="entry name" value="bL21-like"/>
</dbReference>
<dbReference type="InterPro" id="IPR036164">
    <property type="entry name" value="bL21-like_sf"/>
</dbReference>
<dbReference type="InterPro" id="IPR001787">
    <property type="entry name" value="Ribosomal_bL21"/>
</dbReference>
<dbReference type="InterPro" id="IPR018258">
    <property type="entry name" value="Ribosomal_bL21_CS"/>
</dbReference>
<dbReference type="NCBIfam" id="TIGR00061">
    <property type="entry name" value="L21"/>
    <property type="match status" value="1"/>
</dbReference>
<dbReference type="PANTHER" id="PTHR21349">
    <property type="entry name" value="50S RIBOSOMAL PROTEIN L21"/>
    <property type="match status" value="1"/>
</dbReference>
<dbReference type="PANTHER" id="PTHR21349:SF0">
    <property type="entry name" value="LARGE RIBOSOMAL SUBUNIT PROTEIN BL21M"/>
    <property type="match status" value="1"/>
</dbReference>
<dbReference type="Pfam" id="PF00829">
    <property type="entry name" value="Ribosomal_L21p"/>
    <property type="match status" value="1"/>
</dbReference>
<dbReference type="SUPFAM" id="SSF141091">
    <property type="entry name" value="L21p-like"/>
    <property type="match status" value="1"/>
</dbReference>
<dbReference type="PROSITE" id="PS01169">
    <property type="entry name" value="RIBOSOMAL_L21"/>
    <property type="match status" value="1"/>
</dbReference>